<keyword id="KW-0004">4Fe-4S</keyword>
<keyword id="KW-0963">Cytoplasm</keyword>
<keyword id="KW-0408">Iron</keyword>
<keyword id="KW-0411">Iron-sulfur</keyword>
<keyword id="KW-0479">Metal-binding</keyword>
<keyword id="KW-0662">Pyridine nucleotide biosynthesis</keyword>
<keyword id="KW-0808">Transferase</keyword>
<proteinExistence type="inferred from homology"/>
<feature type="chain" id="PRO_0000155793" description="Quinolinate synthase 1">
    <location>
        <begin position="1"/>
        <end position="324"/>
    </location>
</feature>
<feature type="binding site" evidence="1">
    <location>
        <position position="48"/>
    </location>
    <ligand>
        <name>iminosuccinate</name>
        <dbReference type="ChEBI" id="CHEBI:77875"/>
    </ligand>
</feature>
<feature type="binding site" evidence="1">
    <location>
        <position position="66"/>
    </location>
    <ligand>
        <name>iminosuccinate</name>
        <dbReference type="ChEBI" id="CHEBI:77875"/>
    </ligand>
</feature>
<feature type="binding site" evidence="1">
    <location>
        <position position="111"/>
    </location>
    <ligand>
        <name>[4Fe-4S] cluster</name>
        <dbReference type="ChEBI" id="CHEBI:49883"/>
    </ligand>
</feature>
<feature type="binding site" evidence="1">
    <location>
        <begin position="137"/>
        <end position="139"/>
    </location>
    <ligand>
        <name>iminosuccinate</name>
        <dbReference type="ChEBI" id="CHEBI:77875"/>
    </ligand>
</feature>
<feature type="binding site" evidence="1">
    <location>
        <position position="154"/>
    </location>
    <ligand>
        <name>iminosuccinate</name>
        <dbReference type="ChEBI" id="CHEBI:77875"/>
    </ligand>
</feature>
<feature type="binding site" evidence="1">
    <location>
        <position position="196"/>
    </location>
    <ligand>
        <name>[4Fe-4S] cluster</name>
        <dbReference type="ChEBI" id="CHEBI:49883"/>
    </ligand>
</feature>
<feature type="binding site" evidence="1">
    <location>
        <begin position="222"/>
        <end position="224"/>
    </location>
    <ligand>
        <name>iminosuccinate</name>
        <dbReference type="ChEBI" id="CHEBI:77875"/>
    </ligand>
</feature>
<feature type="binding site" evidence="1">
    <location>
        <position position="239"/>
    </location>
    <ligand>
        <name>iminosuccinate</name>
        <dbReference type="ChEBI" id="CHEBI:77875"/>
    </ligand>
</feature>
<feature type="binding site" evidence="1">
    <location>
        <position position="282"/>
    </location>
    <ligand>
        <name>[4Fe-4S] cluster</name>
        <dbReference type="ChEBI" id="CHEBI:49883"/>
    </ligand>
</feature>
<evidence type="ECO:0000255" key="1">
    <source>
        <dbReference type="HAMAP-Rule" id="MF_00568"/>
    </source>
</evidence>
<dbReference type="EC" id="2.5.1.72" evidence="1"/>
<dbReference type="EMBL" id="BA000012">
    <property type="protein sequence ID" value="BAB52215.1"/>
    <property type="molecule type" value="Genomic_DNA"/>
</dbReference>
<dbReference type="SMR" id="Q98AV7"/>
<dbReference type="KEGG" id="mlo:mll5835"/>
<dbReference type="eggNOG" id="COG0379">
    <property type="taxonomic scope" value="Bacteria"/>
</dbReference>
<dbReference type="HOGENOM" id="CLU_047382_0_0_5"/>
<dbReference type="UniPathway" id="UPA00253">
    <property type="reaction ID" value="UER00327"/>
</dbReference>
<dbReference type="Proteomes" id="UP000000552">
    <property type="component" value="Chromosome"/>
</dbReference>
<dbReference type="GO" id="GO:0005829">
    <property type="term" value="C:cytosol"/>
    <property type="evidence" value="ECO:0007669"/>
    <property type="project" value="TreeGrafter"/>
</dbReference>
<dbReference type="GO" id="GO:0051539">
    <property type="term" value="F:4 iron, 4 sulfur cluster binding"/>
    <property type="evidence" value="ECO:0007669"/>
    <property type="project" value="UniProtKB-KW"/>
</dbReference>
<dbReference type="GO" id="GO:0046872">
    <property type="term" value="F:metal ion binding"/>
    <property type="evidence" value="ECO:0007669"/>
    <property type="project" value="UniProtKB-KW"/>
</dbReference>
<dbReference type="GO" id="GO:0008987">
    <property type="term" value="F:quinolinate synthetase A activity"/>
    <property type="evidence" value="ECO:0007669"/>
    <property type="project" value="UniProtKB-UniRule"/>
</dbReference>
<dbReference type="GO" id="GO:0034628">
    <property type="term" value="P:'de novo' NAD biosynthetic process from L-aspartate"/>
    <property type="evidence" value="ECO:0007669"/>
    <property type="project" value="TreeGrafter"/>
</dbReference>
<dbReference type="Gene3D" id="3.40.50.10800">
    <property type="entry name" value="NadA-like"/>
    <property type="match status" value="3"/>
</dbReference>
<dbReference type="HAMAP" id="MF_00568">
    <property type="entry name" value="NadA_type2"/>
    <property type="match status" value="1"/>
</dbReference>
<dbReference type="InterPro" id="IPR003473">
    <property type="entry name" value="NadA"/>
</dbReference>
<dbReference type="InterPro" id="IPR036094">
    <property type="entry name" value="NadA_sf"/>
</dbReference>
<dbReference type="InterPro" id="IPR023066">
    <property type="entry name" value="Quinolinate_synth_type2"/>
</dbReference>
<dbReference type="NCBIfam" id="TIGR00550">
    <property type="entry name" value="nadA"/>
    <property type="match status" value="1"/>
</dbReference>
<dbReference type="NCBIfam" id="NF006878">
    <property type="entry name" value="PRK09375.1-2"/>
    <property type="match status" value="1"/>
</dbReference>
<dbReference type="NCBIfam" id="NF006879">
    <property type="entry name" value="PRK09375.1-4"/>
    <property type="match status" value="1"/>
</dbReference>
<dbReference type="PANTHER" id="PTHR30573:SF0">
    <property type="entry name" value="QUINOLINATE SYNTHASE, CHLOROPLASTIC"/>
    <property type="match status" value="1"/>
</dbReference>
<dbReference type="PANTHER" id="PTHR30573">
    <property type="entry name" value="QUINOLINATE SYNTHETASE A"/>
    <property type="match status" value="1"/>
</dbReference>
<dbReference type="Pfam" id="PF02445">
    <property type="entry name" value="NadA"/>
    <property type="match status" value="1"/>
</dbReference>
<dbReference type="SUPFAM" id="SSF142754">
    <property type="entry name" value="NadA-like"/>
    <property type="match status" value="1"/>
</dbReference>
<organism>
    <name type="scientific">Mesorhizobium japonicum (strain LMG 29417 / CECT 9101 / MAFF 303099)</name>
    <name type="common">Mesorhizobium loti (strain MAFF 303099)</name>
    <dbReference type="NCBI Taxonomy" id="266835"/>
    <lineage>
        <taxon>Bacteria</taxon>
        <taxon>Pseudomonadati</taxon>
        <taxon>Pseudomonadota</taxon>
        <taxon>Alphaproteobacteria</taxon>
        <taxon>Hyphomicrobiales</taxon>
        <taxon>Phyllobacteriaceae</taxon>
        <taxon>Mesorhizobium</taxon>
    </lineage>
</organism>
<comment type="function">
    <text evidence="1">Catalyzes the condensation of iminoaspartate with dihydroxyacetone phosphate to form quinolinate.</text>
</comment>
<comment type="catalytic activity">
    <reaction evidence="1">
        <text>iminosuccinate + dihydroxyacetone phosphate = quinolinate + phosphate + 2 H2O + H(+)</text>
        <dbReference type="Rhea" id="RHEA:25888"/>
        <dbReference type="ChEBI" id="CHEBI:15377"/>
        <dbReference type="ChEBI" id="CHEBI:15378"/>
        <dbReference type="ChEBI" id="CHEBI:29959"/>
        <dbReference type="ChEBI" id="CHEBI:43474"/>
        <dbReference type="ChEBI" id="CHEBI:57642"/>
        <dbReference type="ChEBI" id="CHEBI:77875"/>
        <dbReference type="EC" id="2.5.1.72"/>
    </reaction>
    <physiologicalReaction direction="left-to-right" evidence="1">
        <dbReference type="Rhea" id="RHEA:25889"/>
    </physiologicalReaction>
</comment>
<comment type="cofactor">
    <cofactor evidence="1">
        <name>[4Fe-4S] cluster</name>
        <dbReference type="ChEBI" id="CHEBI:49883"/>
    </cofactor>
    <text evidence="1">Binds 1 [4Fe-4S] cluster per subunit.</text>
</comment>
<comment type="pathway">
    <text evidence="1">Cofactor biosynthesis; NAD(+) biosynthesis; quinolinate from iminoaspartate: step 1/1.</text>
</comment>
<comment type="subcellular location">
    <subcellularLocation>
        <location evidence="1">Cytoplasm</location>
    </subcellularLocation>
</comment>
<comment type="similarity">
    <text evidence="1">Belongs to the quinolinate synthase family. Type 2 subfamily.</text>
</comment>
<name>NADA1_RHILO</name>
<gene>
    <name evidence="1" type="primary">nadA1</name>
    <name type="ordered locus">mll5835</name>
</gene>
<protein>
    <recommendedName>
        <fullName evidence="1">Quinolinate synthase 1</fullName>
        <ecNumber evidence="1">2.5.1.72</ecNumber>
    </recommendedName>
</protein>
<accession>Q98AV7</accession>
<sequence>MSAVLPSSASLYDRVRRVIPPIEWSVFVEDIDAILNLKRQRNAVILAHNYQTPEIFHCVADIVGDSLALARKAMTVDAEIIVLAGVHFMAETAKLLNPDKTVLIPDLGAGCSLAESITAEDVRLMRQRYPSVPVVTYVNTSAAVKAESDICCTSGNALAVVKSLGAPRVIMLPDEYLAKNIAAQTKVEIIAWKGRCEVHERFTAADIRELREAHPGISVLAHPECPPEVVAEADFAGSTAAMSDYVARHRPARVVLMTECSMSDNVAVEHPEVDFVRPCNLCPHMKRITLANIRTALEENRHVVTIDPHVAERARWAVERMLFV</sequence>
<reference key="1">
    <citation type="journal article" date="2000" name="DNA Res.">
        <title>Complete genome structure of the nitrogen-fixing symbiotic bacterium Mesorhizobium loti.</title>
        <authorList>
            <person name="Kaneko T."/>
            <person name="Nakamura Y."/>
            <person name="Sato S."/>
            <person name="Asamizu E."/>
            <person name="Kato T."/>
            <person name="Sasamoto S."/>
            <person name="Watanabe A."/>
            <person name="Idesawa K."/>
            <person name="Ishikawa A."/>
            <person name="Kawashima K."/>
            <person name="Kimura T."/>
            <person name="Kishida Y."/>
            <person name="Kiyokawa C."/>
            <person name="Kohara M."/>
            <person name="Matsumoto M."/>
            <person name="Matsuno A."/>
            <person name="Mochizuki Y."/>
            <person name="Nakayama S."/>
            <person name="Nakazaki N."/>
            <person name="Shimpo S."/>
            <person name="Sugimoto M."/>
            <person name="Takeuchi C."/>
            <person name="Yamada M."/>
            <person name="Tabata S."/>
        </authorList>
    </citation>
    <scope>NUCLEOTIDE SEQUENCE [LARGE SCALE GENOMIC DNA]</scope>
    <source>
        <strain>LMG 29417 / CECT 9101 / MAFF 303099</strain>
    </source>
</reference>